<organism>
    <name type="scientific">Oryza sativa subsp. japonica</name>
    <name type="common">Rice</name>
    <dbReference type="NCBI Taxonomy" id="39947"/>
    <lineage>
        <taxon>Eukaryota</taxon>
        <taxon>Viridiplantae</taxon>
        <taxon>Streptophyta</taxon>
        <taxon>Embryophyta</taxon>
        <taxon>Tracheophyta</taxon>
        <taxon>Spermatophyta</taxon>
        <taxon>Magnoliopsida</taxon>
        <taxon>Liliopsida</taxon>
        <taxon>Poales</taxon>
        <taxon>Poaceae</taxon>
        <taxon>BOP clade</taxon>
        <taxon>Oryzoideae</taxon>
        <taxon>Oryzeae</taxon>
        <taxon>Oryzinae</taxon>
        <taxon>Oryza</taxon>
        <taxon>Oryza sativa</taxon>
    </lineage>
</organism>
<reference key="1">
    <citation type="journal article" date="2002" name="Nature">
        <title>The genome sequence and structure of rice chromosome 1.</title>
        <authorList>
            <person name="Sasaki T."/>
            <person name="Matsumoto T."/>
            <person name="Yamamoto K."/>
            <person name="Sakata K."/>
            <person name="Baba T."/>
            <person name="Katayose Y."/>
            <person name="Wu J."/>
            <person name="Niimura Y."/>
            <person name="Cheng Z."/>
            <person name="Nagamura Y."/>
            <person name="Antonio B.A."/>
            <person name="Kanamori H."/>
            <person name="Hosokawa S."/>
            <person name="Masukawa M."/>
            <person name="Arikawa K."/>
            <person name="Chiden Y."/>
            <person name="Hayashi M."/>
            <person name="Okamoto M."/>
            <person name="Ando T."/>
            <person name="Aoki H."/>
            <person name="Arita K."/>
            <person name="Hamada M."/>
            <person name="Harada C."/>
            <person name="Hijishita S."/>
            <person name="Honda M."/>
            <person name="Ichikawa Y."/>
            <person name="Idonuma A."/>
            <person name="Iijima M."/>
            <person name="Ikeda M."/>
            <person name="Ikeno M."/>
            <person name="Ito S."/>
            <person name="Ito T."/>
            <person name="Ito Y."/>
            <person name="Ito Y."/>
            <person name="Iwabuchi A."/>
            <person name="Kamiya K."/>
            <person name="Karasawa W."/>
            <person name="Katagiri S."/>
            <person name="Kikuta A."/>
            <person name="Kobayashi N."/>
            <person name="Kono I."/>
            <person name="Machita K."/>
            <person name="Maehara T."/>
            <person name="Mizuno H."/>
            <person name="Mizubayashi T."/>
            <person name="Mukai Y."/>
            <person name="Nagasaki H."/>
            <person name="Nakashima M."/>
            <person name="Nakama Y."/>
            <person name="Nakamichi Y."/>
            <person name="Nakamura M."/>
            <person name="Namiki N."/>
            <person name="Negishi M."/>
            <person name="Ohta I."/>
            <person name="Ono N."/>
            <person name="Saji S."/>
            <person name="Sakai K."/>
            <person name="Shibata M."/>
            <person name="Shimokawa T."/>
            <person name="Shomura A."/>
            <person name="Song J."/>
            <person name="Takazaki Y."/>
            <person name="Terasawa K."/>
            <person name="Tsuji K."/>
            <person name="Waki K."/>
            <person name="Yamagata H."/>
            <person name="Yamane H."/>
            <person name="Yoshiki S."/>
            <person name="Yoshihara R."/>
            <person name="Yukawa K."/>
            <person name="Zhong H."/>
            <person name="Iwama H."/>
            <person name="Endo T."/>
            <person name="Ito H."/>
            <person name="Hahn J.H."/>
            <person name="Kim H.-I."/>
            <person name="Eun M.-Y."/>
            <person name="Yano M."/>
            <person name="Jiang J."/>
            <person name="Gojobori T."/>
        </authorList>
    </citation>
    <scope>NUCLEOTIDE SEQUENCE [LARGE SCALE GENOMIC DNA]</scope>
    <source>
        <strain>cv. Nipponbare</strain>
    </source>
</reference>
<reference key="2">
    <citation type="journal article" date="2005" name="Nature">
        <title>The map-based sequence of the rice genome.</title>
        <authorList>
            <consortium name="International rice genome sequencing project (IRGSP)"/>
        </authorList>
    </citation>
    <scope>NUCLEOTIDE SEQUENCE [LARGE SCALE GENOMIC DNA]</scope>
    <source>
        <strain>cv. Nipponbare</strain>
    </source>
</reference>
<reference key="3">
    <citation type="journal article" date="2008" name="Nucleic Acids Res.">
        <title>The rice annotation project database (RAP-DB): 2008 update.</title>
        <authorList>
            <consortium name="The rice annotation project (RAP)"/>
        </authorList>
    </citation>
    <scope>GENOME REANNOTATION</scope>
    <source>
        <strain>cv. Nipponbare</strain>
    </source>
</reference>
<reference key="4">
    <citation type="journal article" date="2013" name="Rice">
        <title>Improvement of the Oryza sativa Nipponbare reference genome using next generation sequence and optical map data.</title>
        <authorList>
            <person name="Kawahara Y."/>
            <person name="de la Bastide M."/>
            <person name="Hamilton J.P."/>
            <person name="Kanamori H."/>
            <person name="McCombie W.R."/>
            <person name="Ouyang S."/>
            <person name="Schwartz D.C."/>
            <person name="Tanaka T."/>
            <person name="Wu J."/>
            <person name="Zhou S."/>
            <person name="Childs K.L."/>
            <person name="Davidson R.M."/>
            <person name="Lin H."/>
            <person name="Quesada-Ocampo L."/>
            <person name="Vaillancourt B."/>
            <person name="Sakai H."/>
            <person name="Lee S.S."/>
            <person name="Kim J."/>
            <person name="Numa H."/>
            <person name="Itoh T."/>
            <person name="Buell C.R."/>
            <person name="Matsumoto T."/>
        </authorList>
    </citation>
    <scope>GENOME REANNOTATION</scope>
    <source>
        <strain>cv. Nipponbare</strain>
    </source>
</reference>
<reference key="5">
    <citation type="journal article" date="2005" name="PLoS Biol.">
        <title>The genomes of Oryza sativa: a history of duplications.</title>
        <authorList>
            <person name="Yu J."/>
            <person name="Wang J."/>
            <person name="Lin W."/>
            <person name="Li S."/>
            <person name="Li H."/>
            <person name="Zhou J."/>
            <person name="Ni P."/>
            <person name="Dong W."/>
            <person name="Hu S."/>
            <person name="Zeng C."/>
            <person name="Zhang J."/>
            <person name="Zhang Y."/>
            <person name="Li R."/>
            <person name="Xu Z."/>
            <person name="Li S."/>
            <person name="Li X."/>
            <person name="Zheng H."/>
            <person name="Cong L."/>
            <person name="Lin L."/>
            <person name="Yin J."/>
            <person name="Geng J."/>
            <person name="Li G."/>
            <person name="Shi J."/>
            <person name="Liu J."/>
            <person name="Lv H."/>
            <person name="Li J."/>
            <person name="Wang J."/>
            <person name="Deng Y."/>
            <person name="Ran L."/>
            <person name="Shi X."/>
            <person name="Wang X."/>
            <person name="Wu Q."/>
            <person name="Li C."/>
            <person name="Ren X."/>
            <person name="Wang J."/>
            <person name="Wang X."/>
            <person name="Li D."/>
            <person name="Liu D."/>
            <person name="Zhang X."/>
            <person name="Ji Z."/>
            <person name="Zhao W."/>
            <person name="Sun Y."/>
            <person name="Zhang Z."/>
            <person name="Bao J."/>
            <person name="Han Y."/>
            <person name="Dong L."/>
            <person name="Ji J."/>
            <person name="Chen P."/>
            <person name="Wu S."/>
            <person name="Liu J."/>
            <person name="Xiao Y."/>
            <person name="Bu D."/>
            <person name="Tan J."/>
            <person name="Yang L."/>
            <person name="Ye C."/>
            <person name="Zhang J."/>
            <person name="Xu J."/>
            <person name="Zhou Y."/>
            <person name="Yu Y."/>
            <person name="Zhang B."/>
            <person name="Zhuang S."/>
            <person name="Wei H."/>
            <person name="Liu B."/>
            <person name="Lei M."/>
            <person name="Yu H."/>
            <person name="Li Y."/>
            <person name="Xu H."/>
            <person name="Wei S."/>
            <person name="He X."/>
            <person name="Fang L."/>
            <person name="Zhang Z."/>
            <person name="Zhang Y."/>
            <person name="Huang X."/>
            <person name="Su Z."/>
            <person name="Tong W."/>
            <person name="Li J."/>
            <person name="Tong Z."/>
            <person name="Li S."/>
            <person name="Ye J."/>
            <person name="Wang L."/>
            <person name="Fang L."/>
            <person name="Lei T."/>
            <person name="Chen C.-S."/>
            <person name="Chen H.-C."/>
            <person name="Xu Z."/>
            <person name="Li H."/>
            <person name="Huang H."/>
            <person name="Zhang F."/>
            <person name="Xu H."/>
            <person name="Li N."/>
            <person name="Zhao C."/>
            <person name="Li S."/>
            <person name="Dong L."/>
            <person name="Huang Y."/>
            <person name="Li L."/>
            <person name="Xi Y."/>
            <person name="Qi Q."/>
            <person name="Li W."/>
            <person name="Zhang B."/>
            <person name="Hu W."/>
            <person name="Zhang Y."/>
            <person name="Tian X."/>
            <person name="Jiao Y."/>
            <person name="Liang X."/>
            <person name="Jin J."/>
            <person name="Gao L."/>
            <person name="Zheng W."/>
            <person name="Hao B."/>
            <person name="Liu S.-M."/>
            <person name="Wang W."/>
            <person name="Yuan L."/>
            <person name="Cao M."/>
            <person name="McDermott J."/>
            <person name="Samudrala R."/>
            <person name="Wang J."/>
            <person name="Wong G.K.-S."/>
            <person name="Yang H."/>
        </authorList>
    </citation>
    <scope>NUCLEOTIDE SEQUENCE [LARGE SCALE GENOMIC DNA]</scope>
    <source>
        <strain>cv. Nipponbare</strain>
    </source>
</reference>
<reference key="6">
    <citation type="journal article" date="2003" name="Science">
        <title>Collection, mapping, and annotation of over 28,000 cDNA clones from japonica rice.</title>
        <authorList>
            <consortium name="The rice full-length cDNA consortium"/>
        </authorList>
    </citation>
    <scope>NUCLEOTIDE SEQUENCE [LARGE SCALE MRNA]</scope>
    <source>
        <strain>cv. Nipponbare</strain>
    </source>
</reference>
<reference key="7">
    <citation type="journal article" date="2007" name="Biochim. Biophys. Acta">
        <title>Dependence of reaction center-type energy-dependent quenching on photosystem II antenna size.</title>
        <authorList>
            <person name="Zulfugarov I.S."/>
            <person name="Ham O.-K."/>
            <person name="Mishra S.R."/>
            <person name="Kim J.-Y."/>
            <person name="Nath K."/>
            <person name="Koo H.-Y."/>
            <person name="Kim H.-S."/>
            <person name="Moon Y.-H."/>
            <person name="An G."/>
            <person name="Lee C.-H."/>
        </authorList>
    </citation>
    <scope>FUNCTION</scope>
    <scope>DISRUPTION PHENOTYPE</scope>
</reference>
<reference key="8">
    <citation type="journal article" date="2010" name="Plant Signal. Behav.">
        <title>Genome-wide analysis of the family of light-harvesting chlorophyll a/b-binding proteins in Arabidopsis and rice.</title>
        <authorList>
            <person name="Umate P."/>
        </authorList>
    </citation>
    <scope>REVIEW</scope>
</reference>
<reference key="9">
    <citation type="journal article" date="2011" name="Plant Cell Physiol.">
        <title>Allocation of absorbed light energy in PSII to thermal dissipations in the presence or absence of PsbS subunits of rice.</title>
        <authorList>
            <person name="Ishida S."/>
            <person name="Morita K."/>
            <person name="Kishine M."/>
            <person name="Takabayashi A."/>
            <person name="Murakami R."/>
            <person name="Takeda S."/>
            <person name="Shimamoto K."/>
            <person name="Sato F."/>
            <person name="Endo T."/>
        </authorList>
    </citation>
    <scope>FUNCTION</scope>
    <scope>DISRUPTION PHENOTYPE</scope>
    <source>
        <strain>cv. Nipponbare</strain>
    </source>
</reference>
<reference key="10">
    <citation type="journal article" date="2011" name="Proc. Natl. Acad. Sci. U.S.A.">
        <title>Molecular distinction in genetic regulation of nonphotochemical quenching in rice.</title>
        <authorList>
            <person name="Kasajima I."/>
            <person name="Ebana K."/>
            <person name="Yamamoto T."/>
            <person name="Takahara K."/>
            <person name="Yano M."/>
            <person name="Kawai-Yamada M."/>
            <person name="Uchimiya H."/>
        </authorList>
    </citation>
    <scope>FUNCTION</scope>
    <scope>DISRUPTION PHENOTYPE</scope>
    <scope>TISSUE SPECIFICITY</scope>
    <scope>GENE FAMILY</scope>
    <scope>NOMENCLATURE</scope>
    <source>
        <strain>cv. Sasanishiki</strain>
    </source>
</reference>
<reference key="11">
    <citation type="journal article" date="2012" name="Plant J.">
        <title>The photoprotective protein PsbS exerts control over CO(2) assimilation rate in fluctuating light in rice.</title>
        <authorList>
            <person name="Hubbart S."/>
            <person name="Ajigboye O.O."/>
            <person name="Horton P."/>
            <person name="Murchie E.H."/>
        </authorList>
    </citation>
    <scope>FUNCTION</scope>
    <scope>DISRUPTION PHENOTYPE</scope>
</reference>
<reference key="12">
    <citation type="journal article" date="2014" name="BMC Plant Biol.">
        <title>Production of superoxide from Photosystem II in a rice (Oryza sativa L.) mutant lacking PsbS.</title>
        <authorList>
            <person name="Zulfugarov I.S."/>
            <person name="Tovuu A."/>
            <person name="Eu Y.-J."/>
            <person name="Dogsom B."/>
            <person name="Poudyal R.S."/>
            <person name="Nath K."/>
            <person name="Hall M."/>
            <person name="Banerjee M."/>
            <person name="Yoon U.C."/>
            <person name="Moon Y.-H."/>
            <person name="An G."/>
            <person name="Jansson S."/>
            <person name="Lee C.-H."/>
        </authorList>
    </citation>
    <scope>FUNCTION</scope>
    <scope>DISRUPTION PHENOTYPE</scope>
</reference>
<reference key="13">
    <citation type="journal article" date="2014" name="Plant Cell Physiol.">
        <title>Physiological functions of PsbS-dependent and PsbS-independent NPQ under naturally fluctuating light conditions.</title>
        <authorList>
            <person name="Ikeuchi M."/>
            <person name="Uebayashi N."/>
            <person name="Sato F."/>
            <person name="Endo T."/>
        </authorList>
    </citation>
    <scope>FUNCTION</scope>
    <scope>DISRUPTION PHENOTYPE</scope>
    <source>
        <strain>cv. Nipponbare</strain>
    </source>
</reference>
<reference key="14">
    <citation type="journal article" date="2014" name="Plant Physiol. Biochem.">
        <title>Light energy allocation at PSII under field light conditions: how much energy is lost in NPQ-associated dissipation?</title>
        <authorList>
            <person name="Endo T."/>
            <person name="Uebayashi N."/>
            <person name="Ishida S."/>
            <person name="Ikeuchi M."/>
            <person name="Sato F."/>
        </authorList>
    </citation>
    <scope>REVIEW</scope>
</reference>
<reference key="15">
    <citation type="journal article" date="2014" name="Plant Physiol. Biochem.">
        <title>Acceleration of cyclic electron flow in rice plants (Oryza sativa L.) deficient in the PsbS protein of Photosystem II.</title>
        <authorList>
            <person name="Zulfugarov I.S."/>
            <person name="Tovuu A."/>
            <person name="Lee C.-H."/>
        </authorList>
    </citation>
    <scope>FUNCTION</scope>
    <scope>DISRUPTION PHENOTYPE</scope>
</reference>
<reference key="16">
    <citation type="journal article" date="2014" name="PLoS ONE">
        <title>Does the upstream region possessing MULE-like sequence in rice upregulate PsbS1 gene expression?</title>
        <authorList>
            <person name="Nuruzzaman M."/>
            <person name="Kanno T."/>
            <person name="Amada R."/>
            <person name="Habu Y."/>
            <person name="Kasajima I."/>
            <person name="Ishikawa T."/>
            <person name="Kawai-Yamada M."/>
            <person name="Uchimiya H."/>
        </authorList>
    </citation>
    <scope>INDUCTION BY LIGHT</scope>
    <scope>MISCELLANEOUS</scope>
    <source>
        <strain>cv. Sasanishiki</strain>
    </source>
</reference>
<dbReference type="EMBL" id="AP003235">
    <property type="protein sequence ID" value="BAB64099.1"/>
    <property type="molecule type" value="Genomic_DNA"/>
</dbReference>
<dbReference type="EMBL" id="AP003286">
    <property type="protein sequence ID" value="BAB89811.1"/>
    <property type="molecule type" value="Genomic_DNA"/>
</dbReference>
<dbReference type="EMBL" id="AP008207">
    <property type="protein sequence ID" value="BAF06843.1"/>
    <property type="molecule type" value="Genomic_DNA"/>
</dbReference>
<dbReference type="EMBL" id="AP014957">
    <property type="protein sequence ID" value="BAS75428.1"/>
    <property type="molecule type" value="Genomic_DNA"/>
</dbReference>
<dbReference type="EMBL" id="CM000138">
    <property type="protein sequence ID" value="EAZ14301.1"/>
    <property type="molecule type" value="Genomic_DNA"/>
</dbReference>
<dbReference type="EMBL" id="AK058284">
    <property type="protein sequence ID" value="BAG86646.1"/>
    <property type="molecule type" value="mRNA"/>
</dbReference>
<dbReference type="EMBL" id="AK071827">
    <property type="protein sequence ID" value="BAG92715.1"/>
    <property type="molecule type" value="mRNA"/>
</dbReference>
<dbReference type="EMBL" id="AK104275">
    <property type="protein sequence ID" value="BAG96563.1"/>
    <property type="molecule type" value="mRNA"/>
</dbReference>
<dbReference type="SMR" id="Q943K1"/>
<dbReference type="FunCoup" id="Q943K1">
    <property type="interactions" value="1210"/>
</dbReference>
<dbReference type="STRING" id="39947.Q943K1"/>
<dbReference type="PaxDb" id="39947-Q943K1"/>
<dbReference type="EnsemblPlants" id="Os01t0869800-01">
    <property type="protein sequence ID" value="Os01t0869800-01"/>
    <property type="gene ID" value="Os01g0869800"/>
</dbReference>
<dbReference type="GeneID" id="4324933"/>
<dbReference type="Gramene" id="Os01t0869800-01">
    <property type="protein sequence ID" value="Os01t0869800-01"/>
    <property type="gene ID" value="Os01g0869800"/>
</dbReference>
<dbReference type="KEGG" id="dosa:Os01g0869800"/>
<dbReference type="KEGG" id="osa:4324933"/>
<dbReference type="eggNOG" id="ENOG502QTMT">
    <property type="taxonomic scope" value="Eukaryota"/>
</dbReference>
<dbReference type="HOGENOM" id="CLU_090803_0_0_1"/>
<dbReference type="InParanoid" id="Q943K1"/>
<dbReference type="OMA" id="PLAQFGY"/>
<dbReference type="OrthoDB" id="48883at2759"/>
<dbReference type="Proteomes" id="UP000000763">
    <property type="component" value="Chromosome 1"/>
</dbReference>
<dbReference type="Proteomes" id="UP000007752">
    <property type="component" value="Chromosome 1"/>
</dbReference>
<dbReference type="Proteomes" id="UP000059680">
    <property type="component" value="Chromosome 1"/>
</dbReference>
<dbReference type="GO" id="GO:0009535">
    <property type="term" value="C:chloroplast thylakoid membrane"/>
    <property type="evidence" value="ECO:0000318"/>
    <property type="project" value="GO_Central"/>
</dbReference>
<dbReference type="GO" id="GO:0009523">
    <property type="term" value="C:photosystem II"/>
    <property type="evidence" value="ECO:0007669"/>
    <property type="project" value="UniProtKB-KW"/>
</dbReference>
<dbReference type="GO" id="GO:0010196">
    <property type="term" value="P:nonphotochemical quenching"/>
    <property type="evidence" value="ECO:0000315"/>
    <property type="project" value="UniProtKB"/>
</dbReference>
<dbReference type="GO" id="GO:0015979">
    <property type="term" value="P:photosynthesis"/>
    <property type="evidence" value="ECO:0007669"/>
    <property type="project" value="UniProtKB-KW"/>
</dbReference>
<dbReference type="GO" id="GO:0009644">
    <property type="term" value="P:response to high light intensity"/>
    <property type="evidence" value="ECO:0000314"/>
    <property type="project" value="UniProtKB"/>
</dbReference>
<dbReference type="FunFam" id="1.10.3460.10:FF:000008">
    <property type="entry name" value="Photosystem II 22 kDa protein, chloroplastic"/>
    <property type="match status" value="2"/>
</dbReference>
<dbReference type="Gene3D" id="1.10.3460.10">
    <property type="entry name" value="Chlorophyll a/b binding protein domain"/>
    <property type="match status" value="2"/>
</dbReference>
<dbReference type="InterPro" id="IPR022796">
    <property type="entry name" value="Chloroa_b-bind"/>
</dbReference>
<dbReference type="PANTHER" id="PTHR14154">
    <property type="entry name" value="UPF0041 BRAIN PROTEIN 44-RELATED"/>
    <property type="match status" value="1"/>
</dbReference>
<dbReference type="Pfam" id="PF00504">
    <property type="entry name" value="Chloroa_b-bind"/>
    <property type="match status" value="1"/>
</dbReference>
<dbReference type="SUPFAM" id="SSF103511">
    <property type="entry name" value="Chlorophyll a-b binding protein"/>
    <property type="match status" value="1"/>
</dbReference>
<feature type="transit peptide" description="Chloroplast" evidence="3">
    <location>
        <begin position="1"/>
        <end position="60"/>
    </location>
</feature>
<feature type="chain" id="PRO_0000447492" description="Photosystem II 22 kDa protein 1, chloroplastic">
    <location>
        <begin position="61"/>
        <end position="268"/>
    </location>
</feature>
<feature type="transmembrane region" description="Helical" evidence="3">
    <location>
        <begin position="99"/>
        <end position="119"/>
    </location>
</feature>
<feature type="transmembrane region" description="Helical" evidence="3">
    <location>
        <begin position="133"/>
        <end position="153"/>
    </location>
</feature>
<feature type="transmembrane region" description="Helical" evidence="3">
    <location>
        <begin position="199"/>
        <end position="219"/>
    </location>
</feature>
<feature type="transmembrane region" description="Helical" evidence="3">
    <location>
        <begin position="234"/>
        <end position="254"/>
    </location>
</feature>
<feature type="repeat" description="1" evidence="1">
    <location>
        <begin position="54"/>
        <end position="161"/>
    </location>
</feature>
<feature type="repeat" description="2" evidence="1">
    <location>
        <begin position="164"/>
        <end position="268"/>
    </location>
</feature>
<evidence type="ECO:0000250" key="1">
    <source>
        <dbReference type="UniProtKB" id="Q0J8R9"/>
    </source>
</evidence>
<evidence type="ECO:0000250" key="2">
    <source>
        <dbReference type="UniProtKB" id="Q9XF91"/>
    </source>
</evidence>
<evidence type="ECO:0000255" key="3"/>
<evidence type="ECO:0000269" key="4">
    <source>
    </source>
</evidence>
<evidence type="ECO:0000269" key="5">
    <source>
    </source>
</evidence>
<evidence type="ECO:0000269" key="6">
    <source>
    </source>
</evidence>
<evidence type="ECO:0000269" key="7">
    <source>
    </source>
</evidence>
<evidence type="ECO:0000269" key="8">
    <source>
    </source>
</evidence>
<evidence type="ECO:0000269" key="9">
    <source>
    </source>
</evidence>
<evidence type="ECO:0000269" key="10">
    <source>
    </source>
</evidence>
<evidence type="ECO:0000269" key="11">
    <source>
    </source>
</evidence>
<evidence type="ECO:0000303" key="12">
    <source>
    </source>
</evidence>
<evidence type="ECO:0000303" key="13">
    <source>
    </source>
</evidence>
<evidence type="ECO:0000303" key="14">
    <source>
    </source>
</evidence>
<evidence type="ECO:0000305" key="15"/>
<evidence type="ECO:0000312" key="16">
    <source>
        <dbReference type="EMBL" id="BAB64099.1"/>
    </source>
</evidence>
<evidence type="ECO:0000312" key="17">
    <source>
        <dbReference type="EMBL" id="BAB89811.1"/>
    </source>
</evidence>
<evidence type="ECO:0000312" key="18">
    <source>
        <dbReference type="EMBL" id="BAF06843.1"/>
    </source>
</evidence>
<evidence type="ECO:0000312" key="19">
    <source>
        <dbReference type="EMBL" id="BAS75428.1"/>
    </source>
</evidence>
<evidence type="ECO:0000312" key="20">
    <source>
        <dbReference type="EMBL" id="EAZ14301.1"/>
    </source>
</evidence>
<sequence length="268" mass="27903">MAQSMLVSGANGTVAAASTSRLQPVRPTPFSRLVLSQPSSSLGRAVSVKTVALFGRSKTKAAPARKAEPKPKFKTEDGIFGTSGGIGFTKENELFVGRVAMLGFAASILGEAITGKGILAQLNLETGIPIYEAEPLLLFFILFTLLGAIGALGDRGSFVDDQPVTGLDKAVIAPGKGFRSALGLSEGGPLFGFTKANELFVGRLAQLGIAFSIIGEIITGKGALAQLNIETGVPINEIEPLVLFNVVFFFIAAINPGTGKFVSDDDEE</sequence>
<keyword id="KW-0150">Chloroplast</keyword>
<keyword id="KW-0472">Membrane</keyword>
<keyword id="KW-0602">Photosynthesis</keyword>
<keyword id="KW-0604">Photosystem II</keyword>
<keyword id="KW-0934">Plastid</keyword>
<keyword id="KW-1185">Reference proteome</keyword>
<keyword id="KW-0677">Repeat</keyword>
<keyword id="KW-0793">Thylakoid</keyword>
<keyword id="KW-0809">Transit peptide</keyword>
<keyword id="KW-0812">Transmembrane</keyword>
<keyword id="KW-1133">Transmembrane helix</keyword>
<name>PSBS1_ORYSJ</name>
<protein>
    <recommendedName>
        <fullName evidence="15">Photosystem II 22 kDa protein 1, chloroplastic</fullName>
        <shortName evidence="15">22 kDa protein of photosystem II 1</shortName>
    </recommendedName>
    <alternativeName>
        <fullName evidence="12 13 14">Photosystem II subunit 1</fullName>
        <shortName evidence="12 13 14">OsPsbS1</shortName>
    </alternativeName>
</protein>
<gene>
    <name evidence="12 13 14" type="primary">PSBS1</name>
    <name evidence="13" type="synonym">qNPQ1-2</name>
    <name evidence="18" type="ordered locus">Os01g0869800</name>
    <name evidence="15" type="ordered locus">LOC_Os01g64960</name>
    <name evidence="20" type="ORF">OsJ_04227</name>
    <name evidence="19" type="ORF">OSNPB_010869800</name>
    <name evidence="16" type="ORF">P0039A07.6</name>
    <name evidence="17" type="ORF">P0677H08.38</name>
</gene>
<comment type="function">
    <text evidence="4 5 6 7 8 10 11">Involved in high light-mediated energy-dependent nonphotochemical quenching (NPQ, qE) and thermal dissipation (TD) thus regulating energy conversion in photosystem II and protecting from photoinhibition (PubMed:17459330, PubMed:21804028, PubMed:21873330, PubMed:22413771, PubMed:24850835, PubMed:25306526, PubMed:25342550). Also seems to regulate quantum yield of electron transport in fluctuating light conditions (PubMed:24850835).</text>
</comment>
<comment type="subcellular location">
    <subcellularLocation>
        <location evidence="2">Plastid</location>
        <location evidence="2">Chloroplast thylakoid membrane</location>
        <topology evidence="3">Multi-pass membrane protein</topology>
    </subcellularLocation>
</comment>
<comment type="tissue specificity">
    <text evidence="5">Expressed in leaves (at protein level).</text>
</comment>
<comment type="induction">
    <text evidence="9">By high light.</text>
</comment>
<comment type="disruption phenotype">
    <text evidence="4 5 6 7 8 10 11">Impaired energy-dependent nonphotochemical quenching (NPQ, qE) in high light conditions leading to an increased susceptibility to photoinhibition (PubMed:17459330, PubMed:21804028, PubMed:22413771, PubMed:25342550). Reduced seeds production (PubMed:21804028). Reduced photosynthetic CO(2) assimilation in high light intensity (PubMed:22413771). Accumulation of superoxide and hydrogen peroxide in chloroplasts (PubMed:25342550). Accelerated cyclic electron flow (CEF) due to an alternate PGR5-dependent CEF pathway conferring a photoprotection of photosystems in the absence of energy-dependent quenching (qE) (PubMed:25306526). Plants missing both PSBS1 and PSBS2 exhibit a decreased light-inducible portion of thermal dissipation (TD), including energy quenching (qE)-associated TD (qE-TD) (PubMed:21873330, PubMed:24850835). Plants missing both PSBS1 and PSBS2 have a higher quantum yield of electron transport upon the transition from high light to low light, but a lower quantum yield of electron transport II upon the transition from low light to high light (PubMed:24850835).</text>
</comment>
<comment type="miscellaneous">
    <text evidence="9">A Mutator-like-element (MULE) is present in the promoter of japonica type cultivars but not in indica type cultivars; this leads to an accumulation in response to high light.</text>
</comment>
<comment type="similarity">
    <text evidence="15">Belongs to the ELIP/psbS family.</text>
</comment>
<proteinExistence type="evidence at protein level"/>
<accession>Q943K1</accession>